<protein>
    <recommendedName>
        <fullName evidence="12">Kappa-theraphotoxin-Gr2c</fullName>
        <shortName evidence="12">Kappa-TRTX-Gr2c</shortName>
    </recommendedName>
    <alternativeName>
        <fullName evidence="19">GTx2-1-1</fullName>
    </alternativeName>
    <alternativeName>
        <fullName evidence="13">GsAF II</fullName>
        <shortName evidence="9 10">GsAFII</shortName>
    </alternativeName>
    <alternativeName>
        <fullName evidence="11">GsAf2</fullName>
    </alternativeName>
    <alternativeName>
        <fullName>Mechanotoxin-alpha</fullName>
    </alternativeName>
</protein>
<dbReference type="EMBL" id="AB201021">
    <property type="protein sequence ID" value="BAN13517.1"/>
    <property type="molecule type" value="mRNA"/>
</dbReference>
<dbReference type="EMBL" id="AB612242">
    <property type="protein sequence ID" value="BAK55734.1"/>
    <property type="molecule type" value="mRNA"/>
</dbReference>
<dbReference type="EMBL" id="AB201022">
    <property type="protein sequence ID" value="BAN13518.1"/>
    <property type="molecule type" value="mRNA"/>
</dbReference>
<dbReference type="SMR" id="P61409"/>
<dbReference type="ArachnoServer" id="AS000027">
    <property type="toxin name" value="kappa-theraphotoxin-Gr2c"/>
</dbReference>
<dbReference type="GO" id="GO:0005576">
    <property type="term" value="C:extracellular region"/>
    <property type="evidence" value="ECO:0007669"/>
    <property type="project" value="UniProtKB-SubCell"/>
</dbReference>
<dbReference type="GO" id="GO:0005246">
    <property type="term" value="F:calcium channel regulator activity"/>
    <property type="evidence" value="ECO:0007669"/>
    <property type="project" value="UniProtKB-KW"/>
</dbReference>
<dbReference type="GO" id="GO:0015459">
    <property type="term" value="F:potassium channel regulator activity"/>
    <property type="evidence" value="ECO:0007669"/>
    <property type="project" value="UniProtKB-KW"/>
</dbReference>
<dbReference type="GO" id="GO:0017080">
    <property type="term" value="F:sodium channel regulator activity"/>
    <property type="evidence" value="ECO:0007669"/>
    <property type="project" value="UniProtKB-KW"/>
</dbReference>
<dbReference type="GO" id="GO:0090729">
    <property type="term" value="F:toxin activity"/>
    <property type="evidence" value="ECO:0007669"/>
    <property type="project" value="UniProtKB-KW"/>
</dbReference>
<dbReference type="SUPFAM" id="SSF57059">
    <property type="entry name" value="omega toxin-like"/>
    <property type="match status" value="1"/>
</dbReference>
<comment type="function">
    <text evidence="3 5 6 7 8">Inhibits sodium channels Nav1.1/SCN1A (IC(50)=5.7 uM), Nav1.2/SCN2A (IC(50)=12 uM), Nav1.4/SCN4A (IC(50)=4 uM), Nav1.6/SCN8A (IC(50)=6.6 uM), Nav1.7/SCN9A (IC(50)=13.6-1030 nM), potassium channels Kv11.1/KCNH2 (IC(50)=4.7 uM), as well as high-voltage-gated calcium channels Cav1.2/CACNA1C (IC(50)= nM) (PubMed:19955179, PubMed:30661758, PubMed:31234412). Also blocks mechanosensitive ion channels (also named stretch-activated channels or SACs) and the hypotonic cell swelling induced calcium increase associated with the activation of such channels (Ref.4). It can thus be useful in treating cardiac ventricular disturbances (Ref.4). Also induces analgesia in mammals (Ref.3).</text>
</comment>
<comment type="subcellular location">
    <subcellularLocation>
        <location evidence="4 7 8">Secreted</location>
    </subcellularLocation>
</comment>
<comment type="tissue specificity">
    <text evidence="16 17 18">Expressed by the venom gland.</text>
</comment>
<comment type="domain">
    <text evidence="1">The presence of a 'disulfide through disulfide knot' structurally defines this protein as a knottin.</text>
</comment>
<comment type="mass spectrometry" mass="3979.9" method="Electrospray" evidence="7 8"/>
<comment type="mass spectrometry" mass="3980.0" method="Unknown" evidence="3"/>
<comment type="miscellaneous">
    <text evidence="15">Negative results: does not have effect on sodium channels Nav1.3/SCN3A (IC(50)=24 uM) and Nav1.5/SCN5A (IC(50)&gt;40 uM), and potassium channels Kv1.1/KCNA1, Kv1.4/KCNA4, Kv11.2/KCNH6 and Kv11.3/KCNH7 (IC(50)&gt;200 uM).</text>
</comment>
<comment type="similarity">
    <text evidence="14">Belongs to the neurotoxin 30 (phrixotoxin) family.</text>
</comment>
<proteinExistence type="evidence at protein level"/>
<feature type="signal peptide" evidence="2">
    <location>
        <begin position="1"/>
        <end position="19"/>
    </location>
</feature>
<feature type="propeptide" id="PRO_0000414298" evidence="3 4 7 8">
    <location>
        <begin position="20"/>
        <end position="50"/>
    </location>
</feature>
<feature type="peptide" id="PRO_0000045016" description="Kappa-theraphotoxin-Gr2c" evidence="4">
    <location>
        <begin position="51"/>
        <end position="81"/>
    </location>
</feature>
<feature type="disulfide bond" evidence="1">
    <location>
        <begin position="52"/>
        <end position="66"/>
    </location>
</feature>
<feature type="disulfide bond" evidence="1">
    <location>
        <begin position="59"/>
        <end position="71"/>
    </location>
</feature>
<feature type="disulfide bond" evidence="1">
    <location>
        <begin position="65"/>
        <end position="75"/>
    </location>
</feature>
<feature type="sequence conflict" description="In Ref. 2; BAN13518." evidence="14" ref="2">
    <original>T</original>
    <variation>I</variation>
    <location>
        <position position="44"/>
    </location>
</feature>
<feature type="sequence conflict" description="In Ref. 1; AA sequence." evidence="14" ref="1">
    <location>
        <position position="81"/>
    </location>
</feature>
<sequence length="81" mass="9679">MKAFFVILGLALLCAYSFALEEQDQLSLRNDLLTVMFAENSELTPETEERYCQKWMWTCDEERKCCEGLVCRLWCKKKIEW</sequence>
<accession>P61409</accession>
<accession>F8WQV7</accession>
<accession>M5AWU7</accession>
<accession>M5AYD2</accession>
<evidence type="ECO:0000250" key="1">
    <source>
        <dbReference type="UniProtKB" id="P61230"/>
    </source>
</evidence>
<evidence type="ECO:0000255" key="2"/>
<evidence type="ECO:0000269" key="3">
    <source>
    </source>
</evidence>
<evidence type="ECO:0000269" key="4">
    <source>
    </source>
</evidence>
<evidence type="ECO:0000269" key="5">
    <source>
    </source>
</evidence>
<evidence type="ECO:0000269" key="6">
    <source>
    </source>
</evidence>
<evidence type="ECO:0000269" key="7">
    <source ref="3"/>
</evidence>
<evidence type="ECO:0000269" key="8">
    <source ref="4"/>
</evidence>
<evidence type="ECO:0000303" key="9">
    <source>
    </source>
</evidence>
<evidence type="ECO:0000303" key="10">
    <source>
    </source>
</evidence>
<evidence type="ECO:0000303" key="11">
    <source>
    </source>
</evidence>
<evidence type="ECO:0000303" key="12">
    <source>
    </source>
</evidence>
<evidence type="ECO:0000303" key="13">
    <source ref="3"/>
</evidence>
<evidence type="ECO:0000305" key="14"/>
<evidence type="ECO:0000305" key="15">
    <source>
    </source>
</evidence>
<evidence type="ECO:0000305" key="16">
    <source>
    </source>
</evidence>
<evidence type="ECO:0000305" key="17">
    <source ref="3"/>
</evidence>
<evidence type="ECO:0000305" key="18">
    <source ref="4"/>
</evidence>
<evidence type="ECO:0000312" key="19">
    <source>
        <dbReference type="EMBL" id="BAN13517.1"/>
    </source>
</evidence>
<evidence type="ECO:0000312" key="20">
    <source>
        <dbReference type="EMBL" id="BAN13518.1"/>
    </source>
</evidence>
<name>AF2_GRARO</name>
<keyword id="KW-0108">Calcium channel impairing toxin</keyword>
<keyword id="KW-0903">Direct protein sequencing</keyword>
<keyword id="KW-1015">Disulfide bond</keyword>
<keyword id="KW-0872">Ion channel impairing toxin</keyword>
<keyword id="KW-0960">Knottin</keyword>
<keyword id="KW-0528">Neurotoxin</keyword>
<keyword id="KW-0632">Potassium channel impairing toxin</keyword>
<keyword id="KW-0964">Secreted</keyword>
<keyword id="KW-0732">Signal</keyword>
<keyword id="KW-0800">Toxin</keyword>
<keyword id="KW-1218">Voltage-gated calcium channel impairing toxin</keyword>
<keyword id="KW-1220">Voltage-gated potassium channel impairing toxin</keyword>
<keyword id="KW-0738">Voltage-gated sodium channel impairing toxin</keyword>
<reference key="1">
    <citation type="journal article" date="2011" name="Toxicon">
        <title>Characterization of voltage-dependent calcium channel blocking peptides from the venom of the tarantula Grammostola rosea.</title>
        <authorList>
            <person name="Ono S."/>
            <person name="Kimura T."/>
            <person name="Kubo T."/>
        </authorList>
    </citation>
    <scope>NUCLEOTIDE SEQUENCE [MRNA]</scope>
    <scope>PROTEIN SEQUENCE OF 51-81</scope>
    <scope>SUBCELLULAR LOCATION</scope>
    <scope>3D-STRUCTURE MODELING</scope>
    <source>
        <tissue>Venom</tissue>
        <tissue>Venom gland</tissue>
    </source>
</reference>
<reference evidence="20" key="2">
    <citation type="submission" date="2005-01" db="EMBL/GenBank/DDBJ databases">
        <title>Grammostola spatulata venom gland cDNA.</title>
        <authorList>
            <person name="Kimura T."/>
            <person name="Kubo T."/>
        </authorList>
    </citation>
    <scope>NUCLEOTIDE SEQUENCE [MRNA]</scope>
    <source>
        <tissue>Venom gland</tissue>
    </source>
</reference>
<reference key="3">
    <citation type="patent" date="1999-03-02" number="US5877026">
        <title>Analgesic peptides from venom of Grammostola spatulata and use thereof.</title>
        <authorList>
            <person name="Lampe R.A."/>
        </authorList>
    </citation>
    <scope>PROTEIN SEQUENCE OF 51-81</scope>
    <scope>FUNCTION</scope>
    <scope>SUBCELLULAR LOCATION</scope>
    <scope>MASS SPECTROMETRY</scope>
    <source>
        <tissue>Venom</tissue>
    </source>
</reference>
<reference key="4">
    <citation type="patent" date="1999-10-19" number="US5968838">
        <title>Antiarrhythmic peptide from venom of spider Grammostola spatulata.</title>
        <authorList>
            <person name="Lampe R.A."/>
        </authorList>
    </citation>
    <scope>PROTEIN SEQUENCE OF 51-81</scope>
    <scope>FUNCTION</scope>
    <scope>SUBCELLULAR LOCATION</scope>
    <scope>MASS SPECTROMETRY</scope>
    <source>
        <tissue>Venom</tissue>
    </source>
</reference>
<reference key="5">
    <citation type="journal article" date="2010" name="J. Biol. Chem.">
        <title>Target promiscuity and heterogeneous effects of tarantula venom peptides affecting Na+ and K+ ion channels.</title>
        <authorList>
            <person name="Redaelli E."/>
            <person name="Cassulini R.R."/>
            <person name="Silva D.F."/>
            <person name="Clement H."/>
            <person name="Schiavon E."/>
            <person name="Zamudio F.Z."/>
            <person name="Odell G."/>
            <person name="Arcangeli A."/>
            <person name="Clare J.J."/>
            <person name="Alagon A."/>
            <person name="de la Vega R.C."/>
            <person name="Possani L.D."/>
            <person name="Wanke E."/>
        </authorList>
    </citation>
    <scope>PROTEIN SEQUENCE OF 51-81</scope>
    <scope>MASS SPECTROMETRY</scope>
    <scope>FUNCTION</scope>
</reference>
<reference key="6">
    <citation type="journal article" date="2010" name="J. Biol. Chem.">
        <authorList>
            <person name="Redaelli E."/>
            <person name="Cassulini R.R."/>
            <person name="Silva D.F."/>
            <person name="Clement H."/>
            <person name="Schiavon E."/>
            <person name="Zamudio F.Z."/>
            <person name="Odell G."/>
            <person name="Arcangeli A."/>
            <person name="Clare J.J."/>
            <person name="Alagon A."/>
            <person name="de la Vega R.C."/>
            <person name="Possani L.D."/>
            <person name="Wanke E."/>
        </authorList>
    </citation>
    <scope>ERRATUM OF PUBMED:19955179</scope>
</reference>
<reference key="7">
    <citation type="journal article" date="2019" name="Cell">
        <title>Structural basis of Nav1.7 inhibition by a gating-modifier spider toxin.</title>
        <authorList>
            <person name="Xu H."/>
            <person name="Li T."/>
            <person name="Rohou A."/>
            <person name="Arthur C.P."/>
            <person name="Tzakoniati F."/>
            <person name="Wong E."/>
            <person name="Estevez A."/>
            <person name="Kugel C."/>
            <person name="Franke Y."/>
            <person name="Chen J."/>
            <person name="Ciferri C."/>
            <person name="Hackos D.H."/>
            <person name="Koth C.M."/>
            <person name="Payandeh J."/>
        </authorList>
    </citation>
    <scope>FUNCTION</scope>
</reference>
<reference key="8">
    <citation type="journal article" date="2019" name="Toxins">
        <title>Chemical synthesis, proper folding, Nav channel selectivity profile and analgesic properties of the spider peptide Phlotoxin 1.</title>
        <authorList>
            <person name="Nicolas S."/>
            <person name="Zoukimian C."/>
            <person name="Bosmans F."/>
            <person name="Montnach J."/>
            <person name="Diochot S."/>
            <person name="Cuypers E."/>
            <person name="De Waard S."/>
            <person name="Beroud R."/>
            <person name="Mebs D."/>
            <person name="Craik D."/>
            <person name="Boturyn D."/>
            <person name="Lazdunski M."/>
            <person name="Tytgat J."/>
            <person name="De Waard M."/>
        </authorList>
    </citation>
    <scope>FUNCTION ON NAV1.7/SCN9A</scope>
    <scope>SYNTHESIS OF 51-81</scope>
</reference>
<organism>
    <name type="scientific">Grammostola rosea</name>
    <name type="common">Chilean rose tarantula</name>
    <name type="synonym">Grammostola spatulata</name>
    <dbReference type="NCBI Taxonomy" id="432528"/>
    <lineage>
        <taxon>Eukaryota</taxon>
        <taxon>Metazoa</taxon>
        <taxon>Ecdysozoa</taxon>
        <taxon>Arthropoda</taxon>
        <taxon>Chelicerata</taxon>
        <taxon>Arachnida</taxon>
        <taxon>Araneae</taxon>
        <taxon>Mygalomorphae</taxon>
        <taxon>Theraphosidae</taxon>
        <taxon>Grammostola</taxon>
    </lineage>
</organism>